<organism>
    <name type="scientific">Shigella dysenteriae serotype 1 (strain Sd197)</name>
    <dbReference type="NCBI Taxonomy" id="300267"/>
    <lineage>
        <taxon>Bacteria</taxon>
        <taxon>Pseudomonadati</taxon>
        <taxon>Pseudomonadota</taxon>
        <taxon>Gammaproteobacteria</taxon>
        <taxon>Enterobacterales</taxon>
        <taxon>Enterobacteriaceae</taxon>
        <taxon>Shigella</taxon>
    </lineage>
</organism>
<gene>
    <name evidence="1" type="primary">btuB</name>
    <name type="ordered locus">SDY_3762</name>
</gene>
<feature type="signal peptide" evidence="1">
    <location>
        <begin position="1"/>
        <end position="20"/>
    </location>
</feature>
<feature type="chain" id="PRO_0000292760" description="Vitamin B12 transporter BtuB">
    <location>
        <begin position="21"/>
        <end position="614"/>
    </location>
</feature>
<feature type="transmembrane region" description="Beta stranded" evidence="1">
    <location>
        <begin position="158"/>
        <end position="165"/>
    </location>
</feature>
<feature type="transmembrane region" description="Beta stranded" evidence="1">
    <location>
        <begin position="169"/>
        <end position="178"/>
    </location>
</feature>
<feature type="transmembrane region" description="Beta stranded" evidence="1">
    <location>
        <begin position="184"/>
        <end position="195"/>
    </location>
</feature>
<feature type="transmembrane region" description="Beta stranded" evidence="1">
    <location>
        <begin position="217"/>
        <end position="227"/>
    </location>
</feature>
<feature type="transmembrane region" description="Beta stranded" evidence="1">
    <location>
        <begin position="232"/>
        <end position="248"/>
    </location>
</feature>
<feature type="transmembrane region" description="Beta stranded" evidence="1">
    <location>
        <begin position="263"/>
        <end position="277"/>
    </location>
</feature>
<feature type="transmembrane region" description="Beta stranded" evidence="1">
    <location>
        <begin position="279"/>
        <end position="296"/>
    </location>
</feature>
<feature type="transmembrane region" description="Beta stranded" evidence="1">
    <location>
        <begin position="309"/>
        <end position="325"/>
    </location>
</feature>
<feature type="transmembrane region" description="Beta stranded" evidence="1">
    <location>
        <begin position="328"/>
        <end position="337"/>
    </location>
</feature>
<feature type="transmembrane region" description="Beta stranded" evidence="1">
    <location>
        <begin position="353"/>
        <end position="369"/>
    </location>
</feature>
<feature type="transmembrane region" description="Beta stranded" evidence="1">
    <location>
        <begin position="371"/>
        <end position="381"/>
    </location>
</feature>
<feature type="transmembrane region" description="Beta stranded" evidence="1">
    <location>
        <begin position="385"/>
        <end position="400"/>
    </location>
</feature>
<feature type="transmembrane region" description="Beta stranded" evidence="1">
    <location>
        <begin position="403"/>
        <end position="417"/>
    </location>
</feature>
<feature type="transmembrane region" description="Beta stranded" evidence="1">
    <location>
        <begin position="434"/>
        <end position="443"/>
    </location>
</feature>
<feature type="transmembrane region" description="Beta stranded" evidence="1">
    <location>
        <begin position="449"/>
        <end position="458"/>
    </location>
</feature>
<feature type="transmembrane region" description="Beta stranded" evidence="1">
    <location>
        <begin position="473"/>
        <end position="490"/>
    </location>
</feature>
<feature type="transmembrane region" description="Beta stranded" evidence="1">
    <location>
        <begin position="494"/>
        <end position="509"/>
    </location>
</feature>
<feature type="transmembrane region" description="Beta stranded" evidence="1">
    <location>
        <begin position="517"/>
        <end position="529"/>
    </location>
</feature>
<feature type="transmembrane region" description="Beta stranded" evidence="1">
    <location>
        <begin position="535"/>
        <end position="550"/>
    </location>
</feature>
<feature type="transmembrane region" description="Beta stranded" evidence="1">
    <location>
        <begin position="558"/>
        <end position="572"/>
    </location>
</feature>
<feature type="transmembrane region" description="Beta stranded" evidence="1">
    <location>
        <begin position="585"/>
        <end position="596"/>
    </location>
</feature>
<feature type="transmembrane region" description="Beta stranded" evidence="1">
    <location>
        <begin position="602"/>
        <end position="614"/>
    </location>
</feature>
<feature type="domain" description="TBDR plug" evidence="2">
    <location>
        <begin position="38"/>
        <end position="152"/>
    </location>
</feature>
<feature type="domain" description="TBDR beta-barrel" evidence="2">
    <location>
        <begin position="155"/>
        <end position="614"/>
    </location>
</feature>
<feature type="short sequence motif" description="TonB box">
    <location>
        <begin position="26"/>
        <end position="33"/>
    </location>
</feature>
<feature type="short sequence motif" description="TonB C-terminal box">
    <location>
        <begin position="597"/>
        <end position="614"/>
    </location>
</feature>
<feature type="binding site" evidence="1">
    <location>
        <position position="83"/>
    </location>
    <ligand>
        <name>cyanocob(III)alamin</name>
        <dbReference type="ChEBI" id="CHEBI:17439"/>
    </ligand>
</feature>
<feature type="binding site" evidence="1">
    <location>
        <position position="85"/>
    </location>
    <ligand>
        <name>cyanocob(III)alamin</name>
        <dbReference type="ChEBI" id="CHEBI:17439"/>
    </ligand>
</feature>
<feature type="binding site" evidence="1">
    <location>
        <position position="92"/>
    </location>
    <ligand>
        <name>cyanocob(III)alamin</name>
        <dbReference type="ChEBI" id="CHEBI:17439"/>
    </ligand>
</feature>
<feature type="binding site" evidence="1">
    <location>
        <begin position="110"/>
        <end position="111"/>
    </location>
    <ligand>
        <name>cyanocob(III)alamin</name>
        <dbReference type="ChEBI" id="CHEBI:17439"/>
    </ligand>
</feature>
<feature type="binding site" evidence="1">
    <location>
        <position position="199"/>
    </location>
    <ligand>
        <name>Ca(2+)</name>
        <dbReference type="ChEBI" id="CHEBI:29108"/>
        <label>1</label>
    </ligand>
</feature>
<feature type="binding site" evidence="1">
    <location>
        <position position="211"/>
    </location>
    <ligand>
        <name>Ca(2+)</name>
        <dbReference type="ChEBI" id="CHEBI:29108"/>
        <label>1</label>
    </ligand>
</feature>
<feature type="binding site" evidence="1">
    <location>
        <position position="213"/>
    </location>
    <ligand>
        <name>Ca(2+)</name>
        <dbReference type="ChEBI" id="CHEBI:29108"/>
        <label>1</label>
    </ligand>
</feature>
<feature type="binding site" evidence="1">
    <location>
        <position position="213"/>
    </location>
    <ligand>
        <name>Ca(2+)</name>
        <dbReference type="ChEBI" id="CHEBI:29108"/>
        <label>2</label>
    </ligand>
</feature>
<feature type="binding site" evidence="1">
    <location>
        <position position="215"/>
    </location>
    <ligand>
        <name>Ca(2+)</name>
        <dbReference type="ChEBI" id="CHEBI:29108"/>
        <label>1</label>
    </ligand>
</feature>
<feature type="binding site" evidence="1">
    <location>
        <position position="215"/>
    </location>
    <ligand>
        <name>Ca(2+)</name>
        <dbReference type="ChEBI" id="CHEBI:29108"/>
        <label>2</label>
    </ligand>
</feature>
<feature type="binding site" evidence="1">
    <location>
        <position position="249"/>
    </location>
    <ligand>
        <name>Ca(2+)</name>
        <dbReference type="ChEBI" id="CHEBI:29108"/>
        <label>2</label>
    </ligand>
</feature>
<feature type="binding site" evidence="1">
    <location>
        <position position="250"/>
    </location>
    <ligand>
        <name>Ca(2+)</name>
        <dbReference type="ChEBI" id="CHEBI:29108"/>
        <label>1</label>
    </ligand>
</feature>
<feature type="binding site" evidence="1">
    <location>
        <position position="250"/>
    </location>
    <ligand>
        <name>Ca(2+)</name>
        <dbReference type="ChEBI" id="CHEBI:29108"/>
        <label>2</label>
    </ligand>
</feature>
<feature type="binding site" evidence="1">
    <location>
        <position position="251"/>
    </location>
    <ligand>
        <name>cyanocob(III)alamin</name>
        <dbReference type="ChEBI" id="CHEBI:17439"/>
    </ligand>
</feature>
<feature type="binding site" evidence="1">
    <location>
        <position position="261"/>
    </location>
    <ligand>
        <name>Ca(2+)</name>
        <dbReference type="ChEBI" id="CHEBI:29108"/>
        <label>2</label>
    </ligand>
</feature>
<feature type="binding site" evidence="1">
    <location>
        <position position="309"/>
    </location>
    <ligand>
        <name>cyanocob(III)alamin</name>
        <dbReference type="ChEBI" id="CHEBI:17439"/>
    </ligand>
</feature>
<feature type="binding site" evidence="1">
    <location>
        <position position="517"/>
    </location>
    <ligand>
        <name>cyanocob(III)alamin</name>
        <dbReference type="ChEBI" id="CHEBI:17439"/>
    </ligand>
</feature>
<feature type="binding site" evidence="1">
    <location>
        <position position="551"/>
    </location>
    <ligand>
        <name>cyanocob(III)alamin</name>
        <dbReference type="ChEBI" id="CHEBI:17439"/>
    </ligand>
</feature>
<name>BTUB_SHIDS</name>
<comment type="function">
    <text evidence="1">Involved in the active translocation of vitamin B12 (cyanocobalamin) across the outer membrane to the periplasmic space. It derives its energy for transport by interacting with the trans-periplasmic membrane protein TonB.</text>
</comment>
<comment type="subcellular location">
    <subcellularLocation>
        <location evidence="1">Cell outer membrane</location>
        <topology evidence="1">Multi-pass membrane protein</topology>
    </subcellularLocation>
</comment>
<comment type="similarity">
    <text evidence="1">Belongs to the TonB-dependent receptor family. BtuB (TC 1.B.14.3.1) subfamily.</text>
</comment>
<keyword id="KW-0106">Calcium</keyword>
<keyword id="KW-0998">Cell outer membrane</keyword>
<keyword id="KW-0406">Ion transport</keyword>
<keyword id="KW-0472">Membrane</keyword>
<keyword id="KW-0479">Metal-binding</keyword>
<keyword id="KW-0626">Porin</keyword>
<keyword id="KW-1185">Reference proteome</keyword>
<keyword id="KW-0732">Signal</keyword>
<keyword id="KW-0798">TonB box</keyword>
<keyword id="KW-0812">Transmembrane</keyword>
<keyword id="KW-1134">Transmembrane beta strand</keyword>
<keyword id="KW-0813">Transport</keyword>
<accession>Q32AE6</accession>
<dbReference type="EMBL" id="CP000034">
    <property type="protein sequence ID" value="ABB63709.1"/>
    <property type="molecule type" value="Genomic_DNA"/>
</dbReference>
<dbReference type="RefSeq" id="WP_000591381.1">
    <property type="nucleotide sequence ID" value="NC_007606.1"/>
</dbReference>
<dbReference type="RefSeq" id="YP_405200.1">
    <property type="nucleotide sequence ID" value="NC_007606.1"/>
</dbReference>
<dbReference type="SMR" id="Q32AE6"/>
<dbReference type="STRING" id="300267.SDY_3762"/>
<dbReference type="EnsemblBacteria" id="ABB63709">
    <property type="protein sequence ID" value="ABB63709"/>
    <property type="gene ID" value="SDY_3762"/>
</dbReference>
<dbReference type="KEGG" id="sdy:SDY_3762"/>
<dbReference type="PATRIC" id="fig|300267.13.peg.4449"/>
<dbReference type="HOGENOM" id="CLU_008287_18_5_6"/>
<dbReference type="Proteomes" id="UP000002716">
    <property type="component" value="Chromosome"/>
</dbReference>
<dbReference type="GO" id="GO:0009279">
    <property type="term" value="C:cell outer membrane"/>
    <property type="evidence" value="ECO:0007669"/>
    <property type="project" value="UniProtKB-SubCell"/>
</dbReference>
<dbReference type="GO" id="GO:0046930">
    <property type="term" value="C:pore complex"/>
    <property type="evidence" value="ECO:0007669"/>
    <property type="project" value="UniProtKB-KW"/>
</dbReference>
<dbReference type="GO" id="GO:0015420">
    <property type="term" value="F:ABC-type vitamin B12 transporter activity"/>
    <property type="evidence" value="ECO:0007669"/>
    <property type="project" value="InterPro"/>
</dbReference>
<dbReference type="GO" id="GO:0046872">
    <property type="term" value="F:metal ion binding"/>
    <property type="evidence" value="ECO:0007669"/>
    <property type="project" value="UniProtKB-KW"/>
</dbReference>
<dbReference type="GO" id="GO:0015288">
    <property type="term" value="F:porin activity"/>
    <property type="evidence" value="ECO:0007669"/>
    <property type="project" value="UniProtKB-KW"/>
</dbReference>
<dbReference type="GO" id="GO:0006811">
    <property type="term" value="P:monoatomic ion transport"/>
    <property type="evidence" value="ECO:0007669"/>
    <property type="project" value="UniProtKB-KW"/>
</dbReference>
<dbReference type="CDD" id="cd01347">
    <property type="entry name" value="ligand_gated_channel"/>
    <property type="match status" value="1"/>
</dbReference>
<dbReference type="FunFam" id="2.170.130.10:FF:000002">
    <property type="entry name" value="Vitamin B12 transporter BtuB"/>
    <property type="match status" value="1"/>
</dbReference>
<dbReference type="FunFam" id="2.40.170.20:FF:000001">
    <property type="entry name" value="Vitamin B12 transporter BtuB"/>
    <property type="match status" value="1"/>
</dbReference>
<dbReference type="Gene3D" id="2.40.170.20">
    <property type="entry name" value="TonB-dependent receptor, beta-barrel domain"/>
    <property type="match status" value="1"/>
</dbReference>
<dbReference type="Gene3D" id="2.170.130.10">
    <property type="entry name" value="TonB-dependent receptor, plug domain"/>
    <property type="match status" value="1"/>
</dbReference>
<dbReference type="HAMAP" id="MF_01531">
    <property type="entry name" value="BtuB"/>
    <property type="match status" value="1"/>
</dbReference>
<dbReference type="InterPro" id="IPR010101">
    <property type="entry name" value="B12_transptr_BtuB"/>
</dbReference>
<dbReference type="InterPro" id="IPR012910">
    <property type="entry name" value="Plug_dom"/>
</dbReference>
<dbReference type="InterPro" id="IPR037066">
    <property type="entry name" value="Plug_dom_sf"/>
</dbReference>
<dbReference type="InterPro" id="IPR039426">
    <property type="entry name" value="TonB-dep_rcpt-like"/>
</dbReference>
<dbReference type="InterPro" id="IPR000531">
    <property type="entry name" value="TonB-dep_rcpt_b-brl"/>
</dbReference>
<dbReference type="InterPro" id="IPR010916">
    <property type="entry name" value="TonB_box_CS"/>
</dbReference>
<dbReference type="InterPro" id="IPR036942">
    <property type="entry name" value="TonB_rcpt_b-brl_sf"/>
</dbReference>
<dbReference type="InterPro" id="IPR010917">
    <property type="entry name" value="TonB_rcpt_CS"/>
</dbReference>
<dbReference type="NCBIfam" id="NF007926">
    <property type="entry name" value="PRK10641.1"/>
    <property type="match status" value="1"/>
</dbReference>
<dbReference type="NCBIfam" id="TIGR01779">
    <property type="entry name" value="TonB-B12"/>
    <property type="match status" value="1"/>
</dbReference>
<dbReference type="PANTHER" id="PTHR30069:SF53">
    <property type="entry name" value="COLICIN I RECEPTOR-RELATED"/>
    <property type="match status" value="1"/>
</dbReference>
<dbReference type="PANTHER" id="PTHR30069">
    <property type="entry name" value="TONB-DEPENDENT OUTER MEMBRANE RECEPTOR"/>
    <property type="match status" value="1"/>
</dbReference>
<dbReference type="Pfam" id="PF07715">
    <property type="entry name" value="Plug"/>
    <property type="match status" value="1"/>
</dbReference>
<dbReference type="Pfam" id="PF00593">
    <property type="entry name" value="TonB_dep_Rec_b-barrel"/>
    <property type="match status" value="1"/>
</dbReference>
<dbReference type="SUPFAM" id="SSF56935">
    <property type="entry name" value="Porins"/>
    <property type="match status" value="1"/>
</dbReference>
<dbReference type="PROSITE" id="PS00430">
    <property type="entry name" value="TONB_DEPENDENT_REC_1"/>
    <property type="match status" value="1"/>
</dbReference>
<dbReference type="PROSITE" id="PS01156">
    <property type="entry name" value="TONB_DEPENDENT_REC_2"/>
    <property type="match status" value="1"/>
</dbReference>
<dbReference type="PROSITE" id="PS52016">
    <property type="entry name" value="TONB_DEPENDENT_REC_3"/>
    <property type="match status" value="1"/>
</dbReference>
<protein>
    <recommendedName>
        <fullName evidence="1">Vitamin B12 transporter BtuB</fullName>
    </recommendedName>
    <alternativeName>
        <fullName evidence="1">Cobalamin receptor</fullName>
    </alternativeName>
    <alternativeName>
        <fullName evidence="1">Outer membrane cobalamin translocator</fullName>
    </alternativeName>
</protein>
<evidence type="ECO:0000255" key="1">
    <source>
        <dbReference type="HAMAP-Rule" id="MF_01531"/>
    </source>
</evidence>
<evidence type="ECO:0000255" key="2">
    <source>
        <dbReference type="PROSITE-ProRule" id="PRU01360"/>
    </source>
</evidence>
<proteinExistence type="inferred from homology"/>
<reference key="1">
    <citation type="journal article" date="2005" name="Nucleic Acids Res.">
        <title>Genome dynamics and diversity of Shigella species, the etiologic agents of bacillary dysentery.</title>
        <authorList>
            <person name="Yang F."/>
            <person name="Yang J."/>
            <person name="Zhang X."/>
            <person name="Chen L."/>
            <person name="Jiang Y."/>
            <person name="Yan Y."/>
            <person name="Tang X."/>
            <person name="Wang J."/>
            <person name="Xiong Z."/>
            <person name="Dong J."/>
            <person name="Xue Y."/>
            <person name="Zhu Y."/>
            <person name="Xu X."/>
            <person name="Sun L."/>
            <person name="Chen S."/>
            <person name="Nie H."/>
            <person name="Peng J."/>
            <person name="Xu J."/>
            <person name="Wang Y."/>
            <person name="Yuan Z."/>
            <person name="Wen Y."/>
            <person name="Yao Z."/>
            <person name="Shen Y."/>
            <person name="Qiang B."/>
            <person name="Hou Y."/>
            <person name="Yu J."/>
            <person name="Jin Q."/>
        </authorList>
    </citation>
    <scope>NUCLEOTIDE SEQUENCE [LARGE SCALE GENOMIC DNA]</scope>
    <source>
        <strain>Sd197</strain>
    </source>
</reference>
<sequence>MIKKASLLTACSVTAFSAWAQDTSPDTLVVTANRFEQPRSTVLAPTTVVTRQDIDRWQSTSVNDVLRRLPGVDITQNGGSGQLSSIFIRGTNASHVLVLIDGVRLNLAGVSGSADLSQFPIALVQSVEYIRGPRSAVYGSDAIGGVVNIITTRDEPGTEISAGWGSNSYQNYDVSTQQQLGDKTRVTLLGDYAHTHGYDVVAYGNTGTQAQPDNDGFLSKTLYGALEHNFTDAWSGFVRGYGYDNRTNYDAYYSPGSPLVDTRKLYSQSWDAGLRYNGELIKSQLITSYSHSKDYNYDPHYGRYDSSATLDEMKQYTVQWANNIIIGHGNVGAGVDWQKQSTALGTAYVKDGYDQRNTGIYLTGLQQVGDFTFEGAARSDDNSQFGRHGTWQTSAGWEFIEGYRFIASYGTSYKAPNLGQLYGFYGNPNLDPEKSKQWEGAFEGLTAGVNWRISGYRNDVSDLIDYDDHTLKYYNEGKARIKGVEATANFDTGPLTHTVSYDYVDARNAITDTPLLRRAKQQVKYQLDWQLYDFDWGITYQYLGTRYDKDYSSYPYQTVKMGGVSLWDLAVAYPVTSHLTVRGKIANLFDKDYETVYGYQTAGREYTLSGSYTF</sequence>